<comment type="similarity">
    <text evidence="1">Belongs to the UPF0358 family.</text>
</comment>
<proteinExistence type="inferred from homology"/>
<name>Y961_STAAN</name>
<protein>
    <recommendedName>
        <fullName evidence="1">UPF0358 protein SA0961</fullName>
    </recommendedName>
</protein>
<evidence type="ECO:0000255" key="1">
    <source>
        <dbReference type="HAMAP-Rule" id="MF_01560"/>
    </source>
</evidence>
<feature type="chain" id="PRO_0000110656" description="UPF0358 protein SA0961">
    <location>
        <begin position="1"/>
        <end position="91"/>
    </location>
</feature>
<reference key="1">
    <citation type="journal article" date="2001" name="Lancet">
        <title>Whole genome sequencing of meticillin-resistant Staphylococcus aureus.</title>
        <authorList>
            <person name="Kuroda M."/>
            <person name="Ohta T."/>
            <person name="Uchiyama I."/>
            <person name="Baba T."/>
            <person name="Yuzawa H."/>
            <person name="Kobayashi I."/>
            <person name="Cui L."/>
            <person name="Oguchi A."/>
            <person name="Aoki K."/>
            <person name="Nagai Y."/>
            <person name="Lian J.-Q."/>
            <person name="Ito T."/>
            <person name="Kanamori M."/>
            <person name="Matsumaru H."/>
            <person name="Maruyama A."/>
            <person name="Murakami H."/>
            <person name="Hosoyama A."/>
            <person name="Mizutani-Ui Y."/>
            <person name="Takahashi N.K."/>
            <person name="Sawano T."/>
            <person name="Inoue R."/>
            <person name="Kaito C."/>
            <person name="Sekimizu K."/>
            <person name="Hirakawa H."/>
            <person name="Kuhara S."/>
            <person name="Goto S."/>
            <person name="Yabuzaki J."/>
            <person name="Kanehisa M."/>
            <person name="Yamashita A."/>
            <person name="Oshima K."/>
            <person name="Furuya K."/>
            <person name="Yoshino C."/>
            <person name="Shiba T."/>
            <person name="Hattori M."/>
            <person name="Ogasawara N."/>
            <person name="Hayashi H."/>
            <person name="Hiramatsu K."/>
        </authorList>
    </citation>
    <scope>NUCLEOTIDE SEQUENCE [LARGE SCALE GENOMIC DNA]</scope>
    <source>
        <strain>N315</strain>
    </source>
</reference>
<sequence length="91" mass="10355">MAKQATMKNAALKQLTKDADEILHLIKVQLDNLTLPSCPLYEEVLDTQMFGLQKEVDFAVKLGLVDREDGKQIMLRLEKELSKLHEAFTLV</sequence>
<dbReference type="EMBL" id="BA000018">
    <property type="protein sequence ID" value="BAB42209.1"/>
    <property type="molecule type" value="Genomic_DNA"/>
</dbReference>
<dbReference type="PIR" id="E89881">
    <property type="entry name" value="E89881"/>
</dbReference>
<dbReference type="RefSeq" id="WP_001118417.1">
    <property type="nucleotide sequence ID" value="NC_002745.2"/>
</dbReference>
<dbReference type="SMR" id="Q7A668"/>
<dbReference type="EnsemblBacteria" id="BAB42209">
    <property type="protein sequence ID" value="BAB42209"/>
    <property type="gene ID" value="BAB42209"/>
</dbReference>
<dbReference type="KEGG" id="sau:SA0961"/>
<dbReference type="HOGENOM" id="CLU_160493_1_0_9"/>
<dbReference type="Gene3D" id="1.10.287.750">
    <property type="entry name" value="SO2669-like"/>
    <property type="match status" value="1"/>
</dbReference>
<dbReference type="HAMAP" id="MF_01560">
    <property type="entry name" value="UPF0358"/>
    <property type="match status" value="1"/>
</dbReference>
<dbReference type="InterPro" id="IPR009983">
    <property type="entry name" value="UPF0358"/>
</dbReference>
<dbReference type="InterPro" id="IPR036270">
    <property type="entry name" value="UPF0358_sf"/>
</dbReference>
<dbReference type="NCBIfam" id="NF010187">
    <property type="entry name" value="PRK13666.1"/>
    <property type="match status" value="1"/>
</dbReference>
<dbReference type="Pfam" id="PF07408">
    <property type="entry name" value="DUF1507"/>
    <property type="match status" value="1"/>
</dbReference>
<dbReference type="SUPFAM" id="SSF140404">
    <property type="entry name" value="EF2458-like"/>
    <property type="match status" value="1"/>
</dbReference>
<organism>
    <name type="scientific">Staphylococcus aureus (strain N315)</name>
    <dbReference type="NCBI Taxonomy" id="158879"/>
    <lineage>
        <taxon>Bacteria</taxon>
        <taxon>Bacillati</taxon>
        <taxon>Bacillota</taxon>
        <taxon>Bacilli</taxon>
        <taxon>Bacillales</taxon>
        <taxon>Staphylococcaceae</taxon>
        <taxon>Staphylococcus</taxon>
    </lineage>
</organism>
<gene>
    <name type="ordered locus">SA0961</name>
</gene>
<accession>Q7A668</accession>